<accession>Q1H2A2</accession>
<name>ISPF_METFK</name>
<keyword id="KW-0414">Isoprene biosynthesis</keyword>
<keyword id="KW-0456">Lyase</keyword>
<keyword id="KW-0479">Metal-binding</keyword>
<keyword id="KW-1185">Reference proteome</keyword>
<sequence length="160" mass="17172">MIRVGNGFDVHQLVEGRPCIIGGVEIPFAKGLKGHSDADVLLHAVSDALLGAAALGDIGKHFPDTDERFKDADSRVLLRHVVALLKAKHYNIVNIDATIIAEAPKMAPHIARMVQHIAEDCDILADCVNVKATTSEKMGFVGRGEGIAAQAVCLIQKYQI</sequence>
<feature type="chain" id="PRO_1000022851" description="2-C-methyl-D-erythritol 2,4-cyclodiphosphate synthase">
    <location>
        <begin position="1"/>
        <end position="160"/>
    </location>
</feature>
<feature type="binding site" evidence="1">
    <location>
        <begin position="9"/>
        <end position="11"/>
    </location>
    <ligand>
        <name>4-CDP-2-C-methyl-D-erythritol 2-phosphate</name>
        <dbReference type="ChEBI" id="CHEBI:57919"/>
    </ligand>
</feature>
<feature type="binding site" evidence="1">
    <location>
        <position position="9"/>
    </location>
    <ligand>
        <name>a divalent metal cation</name>
        <dbReference type="ChEBI" id="CHEBI:60240"/>
    </ligand>
</feature>
<feature type="binding site" evidence="1">
    <location>
        <position position="11"/>
    </location>
    <ligand>
        <name>a divalent metal cation</name>
        <dbReference type="ChEBI" id="CHEBI:60240"/>
    </ligand>
</feature>
<feature type="binding site" evidence="1">
    <location>
        <begin position="35"/>
        <end position="36"/>
    </location>
    <ligand>
        <name>4-CDP-2-C-methyl-D-erythritol 2-phosphate</name>
        <dbReference type="ChEBI" id="CHEBI:57919"/>
    </ligand>
</feature>
<feature type="binding site" evidence="1">
    <location>
        <position position="43"/>
    </location>
    <ligand>
        <name>a divalent metal cation</name>
        <dbReference type="ChEBI" id="CHEBI:60240"/>
    </ligand>
</feature>
<feature type="binding site" evidence="1">
    <location>
        <begin position="57"/>
        <end position="59"/>
    </location>
    <ligand>
        <name>4-CDP-2-C-methyl-D-erythritol 2-phosphate</name>
        <dbReference type="ChEBI" id="CHEBI:57919"/>
    </ligand>
</feature>
<feature type="binding site" evidence="1">
    <location>
        <begin position="62"/>
        <end position="66"/>
    </location>
    <ligand>
        <name>4-CDP-2-C-methyl-D-erythritol 2-phosphate</name>
        <dbReference type="ChEBI" id="CHEBI:57919"/>
    </ligand>
</feature>
<feature type="binding site" evidence="1">
    <location>
        <begin position="101"/>
        <end position="107"/>
    </location>
    <ligand>
        <name>4-CDP-2-C-methyl-D-erythritol 2-phosphate</name>
        <dbReference type="ChEBI" id="CHEBI:57919"/>
    </ligand>
</feature>
<feature type="binding site" evidence="1">
    <location>
        <begin position="133"/>
        <end position="136"/>
    </location>
    <ligand>
        <name>4-CDP-2-C-methyl-D-erythritol 2-phosphate</name>
        <dbReference type="ChEBI" id="CHEBI:57919"/>
    </ligand>
</feature>
<feature type="binding site" evidence="1">
    <location>
        <position position="140"/>
    </location>
    <ligand>
        <name>4-CDP-2-C-methyl-D-erythritol 2-phosphate</name>
        <dbReference type="ChEBI" id="CHEBI:57919"/>
    </ligand>
</feature>
<feature type="binding site" evidence="1">
    <location>
        <position position="143"/>
    </location>
    <ligand>
        <name>4-CDP-2-C-methyl-D-erythritol 2-phosphate</name>
        <dbReference type="ChEBI" id="CHEBI:57919"/>
    </ligand>
</feature>
<feature type="site" description="Transition state stabilizer" evidence="1">
    <location>
        <position position="35"/>
    </location>
</feature>
<feature type="site" description="Transition state stabilizer" evidence="1">
    <location>
        <position position="134"/>
    </location>
</feature>
<evidence type="ECO:0000255" key="1">
    <source>
        <dbReference type="HAMAP-Rule" id="MF_00107"/>
    </source>
</evidence>
<protein>
    <recommendedName>
        <fullName evidence="1">2-C-methyl-D-erythritol 2,4-cyclodiphosphate synthase</fullName>
        <shortName evidence="1">MECDP-synthase</shortName>
        <shortName evidence="1">MECPP-synthase</shortName>
        <shortName evidence="1">MECPS</shortName>
        <ecNumber evidence="1">4.6.1.12</ecNumber>
    </recommendedName>
</protein>
<dbReference type="EC" id="4.6.1.12" evidence="1"/>
<dbReference type="EMBL" id="CP000284">
    <property type="protein sequence ID" value="ABE49385.1"/>
    <property type="molecule type" value="Genomic_DNA"/>
</dbReference>
<dbReference type="RefSeq" id="WP_011479339.1">
    <property type="nucleotide sequence ID" value="NC_007947.1"/>
</dbReference>
<dbReference type="SMR" id="Q1H2A2"/>
<dbReference type="STRING" id="265072.Mfla_1117"/>
<dbReference type="KEGG" id="mfa:Mfla_1117"/>
<dbReference type="eggNOG" id="COG0245">
    <property type="taxonomic scope" value="Bacteria"/>
</dbReference>
<dbReference type="HOGENOM" id="CLU_084630_2_0_4"/>
<dbReference type="OrthoDB" id="9804336at2"/>
<dbReference type="UniPathway" id="UPA00056">
    <property type="reaction ID" value="UER00095"/>
</dbReference>
<dbReference type="Proteomes" id="UP000002440">
    <property type="component" value="Chromosome"/>
</dbReference>
<dbReference type="GO" id="GO:0008685">
    <property type="term" value="F:2-C-methyl-D-erythritol 2,4-cyclodiphosphate synthase activity"/>
    <property type="evidence" value="ECO:0007669"/>
    <property type="project" value="UniProtKB-UniRule"/>
</dbReference>
<dbReference type="GO" id="GO:0046872">
    <property type="term" value="F:metal ion binding"/>
    <property type="evidence" value="ECO:0007669"/>
    <property type="project" value="UniProtKB-KW"/>
</dbReference>
<dbReference type="GO" id="GO:0019288">
    <property type="term" value="P:isopentenyl diphosphate biosynthetic process, methylerythritol 4-phosphate pathway"/>
    <property type="evidence" value="ECO:0007669"/>
    <property type="project" value="UniProtKB-UniRule"/>
</dbReference>
<dbReference type="GO" id="GO:0016114">
    <property type="term" value="P:terpenoid biosynthetic process"/>
    <property type="evidence" value="ECO:0007669"/>
    <property type="project" value="InterPro"/>
</dbReference>
<dbReference type="CDD" id="cd00554">
    <property type="entry name" value="MECDP_synthase"/>
    <property type="match status" value="1"/>
</dbReference>
<dbReference type="FunFam" id="3.30.1330.50:FF:000001">
    <property type="entry name" value="2-C-methyl-D-erythritol 2,4-cyclodiphosphate synthase"/>
    <property type="match status" value="1"/>
</dbReference>
<dbReference type="Gene3D" id="3.30.1330.50">
    <property type="entry name" value="2-C-methyl-D-erythritol 2,4-cyclodiphosphate synthase"/>
    <property type="match status" value="1"/>
</dbReference>
<dbReference type="HAMAP" id="MF_00107">
    <property type="entry name" value="IspF"/>
    <property type="match status" value="1"/>
</dbReference>
<dbReference type="InterPro" id="IPR003526">
    <property type="entry name" value="MECDP_synthase"/>
</dbReference>
<dbReference type="InterPro" id="IPR020555">
    <property type="entry name" value="MECDP_synthase_CS"/>
</dbReference>
<dbReference type="InterPro" id="IPR036571">
    <property type="entry name" value="MECDP_synthase_sf"/>
</dbReference>
<dbReference type="NCBIfam" id="TIGR00151">
    <property type="entry name" value="ispF"/>
    <property type="match status" value="1"/>
</dbReference>
<dbReference type="PANTHER" id="PTHR43181">
    <property type="entry name" value="2-C-METHYL-D-ERYTHRITOL 2,4-CYCLODIPHOSPHATE SYNTHASE, CHLOROPLASTIC"/>
    <property type="match status" value="1"/>
</dbReference>
<dbReference type="PANTHER" id="PTHR43181:SF1">
    <property type="entry name" value="2-C-METHYL-D-ERYTHRITOL 2,4-CYCLODIPHOSPHATE SYNTHASE, CHLOROPLASTIC"/>
    <property type="match status" value="1"/>
</dbReference>
<dbReference type="Pfam" id="PF02542">
    <property type="entry name" value="YgbB"/>
    <property type="match status" value="1"/>
</dbReference>
<dbReference type="SUPFAM" id="SSF69765">
    <property type="entry name" value="IpsF-like"/>
    <property type="match status" value="1"/>
</dbReference>
<dbReference type="PROSITE" id="PS01350">
    <property type="entry name" value="ISPF"/>
    <property type="match status" value="1"/>
</dbReference>
<proteinExistence type="inferred from homology"/>
<organism>
    <name type="scientific">Methylobacillus flagellatus (strain ATCC 51484 / DSM 6875 / VKM B-1610 / KT)</name>
    <dbReference type="NCBI Taxonomy" id="265072"/>
    <lineage>
        <taxon>Bacteria</taxon>
        <taxon>Pseudomonadati</taxon>
        <taxon>Pseudomonadota</taxon>
        <taxon>Betaproteobacteria</taxon>
        <taxon>Nitrosomonadales</taxon>
        <taxon>Methylophilaceae</taxon>
        <taxon>Methylobacillus</taxon>
    </lineage>
</organism>
<reference key="1">
    <citation type="submission" date="2006-03" db="EMBL/GenBank/DDBJ databases">
        <title>Complete sequence of Methylobacillus flagellatus KT.</title>
        <authorList>
            <consortium name="US DOE Joint Genome Institute"/>
            <person name="Copeland A."/>
            <person name="Lucas S."/>
            <person name="Lapidus A."/>
            <person name="Barry K."/>
            <person name="Detter J.C."/>
            <person name="Glavina del Rio T."/>
            <person name="Hammon N."/>
            <person name="Israni S."/>
            <person name="Dalin E."/>
            <person name="Tice H."/>
            <person name="Pitluck S."/>
            <person name="Brettin T."/>
            <person name="Bruce D."/>
            <person name="Han C."/>
            <person name="Tapia R."/>
            <person name="Saunders E."/>
            <person name="Gilna P."/>
            <person name="Schmutz J."/>
            <person name="Larimer F."/>
            <person name="Land M."/>
            <person name="Kyrpides N."/>
            <person name="Anderson I."/>
            <person name="Richardson P."/>
        </authorList>
    </citation>
    <scope>NUCLEOTIDE SEQUENCE [LARGE SCALE GENOMIC DNA]</scope>
    <source>
        <strain>ATCC 51484 / DSM 6875 / VKM B-1610 / KT</strain>
    </source>
</reference>
<gene>
    <name evidence="1" type="primary">ispF</name>
    <name type="ordered locus">Mfla_1117</name>
</gene>
<comment type="function">
    <text evidence="1">Involved in the biosynthesis of isopentenyl diphosphate (IPP) and dimethylallyl diphosphate (DMAPP), two major building blocks of isoprenoid compounds. Catalyzes the conversion of 4-diphosphocytidyl-2-C-methyl-D-erythritol 2-phosphate (CDP-ME2P) to 2-C-methyl-D-erythritol 2,4-cyclodiphosphate (ME-CPP) with a corresponding release of cytidine 5-monophosphate (CMP).</text>
</comment>
<comment type="catalytic activity">
    <reaction evidence="1">
        <text>4-CDP-2-C-methyl-D-erythritol 2-phosphate = 2-C-methyl-D-erythritol 2,4-cyclic diphosphate + CMP</text>
        <dbReference type="Rhea" id="RHEA:23864"/>
        <dbReference type="ChEBI" id="CHEBI:57919"/>
        <dbReference type="ChEBI" id="CHEBI:58483"/>
        <dbReference type="ChEBI" id="CHEBI:60377"/>
        <dbReference type="EC" id="4.6.1.12"/>
    </reaction>
</comment>
<comment type="cofactor">
    <cofactor evidence="1">
        <name>a divalent metal cation</name>
        <dbReference type="ChEBI" id="CHEBI:60240"/>
    </cofactor>
    <text evidence="1">Binds 1 divalent metal cation per subunit.</text>
</comment>
<comment type="pathway">
    <text evidence="1">Isoprenoid biosynthesis; isopentenyl diphosphate biosynthesis via DXP pathway; isopentenyl diphosphate from 1-deoxy-D-xylulose 5-phosphate: step 4/6.</text>
</comment>
<comment type="subunit">
    <text evidence="1">Homotrimer.</text>
</comment>
<comment type="similarity">
    <text evidence="1">Belongs to the IspF family.</text>
</comment>